<name>YQJA_BACSU</name>
<protein>
    <recommendedName>
        <fullName>Uncharacterized protein YqjA</fullName>
    </recommendedName>
</protein>
<keyword id="KW-1003">Cell membrane</keyword>
<keyword id="KW-0472">Membrane</keyword>
<keyword id="KW-1185">Reference proteome</keyword>
<keyword id="KW-0812">Transmembrane</keyword>
<keyword id="KW-1133">Transmembrane helix</keyword>
<comment type="subcellular location">
    <subcellularLocation>
        <location evidence="2">Cell membrane</location>
        <topology evidence="2">Multi-pass membrane protein</topology>
    </subcellularLocation>
</comment>
<dbReference type="EMBL" id="D84432">
    <property type="protein sequence ID" value="BAA12607.1"/>
    <property type="molecule type" value="Genomic_DNA"/>
</dbReference>
<dbReference type="EMBL" id="AL009126">
    <property type="protein sequence ID" value="CAB14326.2"/>
    <property type="molecule type" value="Genomic_DNA"/>
</dbReference>
<dbReference type="PIR" id="A69963">
    <property type="entry name" value="A69963"/>
</dbReference>
<dbReference type="RefSeq" id="NP_390275.2">
    <property type="nucleotide sequence ID" value="NC_000964.3"/>
</dbReference>
<dbReference type="RefSeq" id="WP_003246146.1">
    <property type="nucleotide sequence ID" value="NZ_OZ025638.1"/>
</dbReference>
<dbReference type="SMR" id="P54538"/>
<dbReference type="FunCoup" id="P54538">
    <property type="interactions" value="81"/>
</dbReference>
<dbReference type="IntAct" id="P54538">
    <property type="interactions" value="2"/>
</dbReference>
<dbReference type="STRING" id="224308.BSU23950"/>
<dbReference type="TCDB" id="2.A.85.4.4">
    <property type="family name" value="the aromatic acid exporter (arae) family"/>
</dbReference>
<dbReference type="PaxDb" id="224308-BSU23950"/>
<dbReference type="EnsemblBacteria" id="CAB14326">
    <property type="protein sequence ID" value="CAB14326"/>
    <property type="gene ID" value="BSU_23950"/>
</dbReference>
<dbReference type="GeneID" id="938681"/>
<dbReference type="KEGG" id="bsu:BSU23950"/>
<dbReference type="PATRIC" id="fig|224308.179.peg.2609"/>
<dbReference type="eggNOG" id="COG4129">
    <property type="taxonomic scope" value="Bacteria"/>
</dbReference>
<dbReference type="InParanoid" id="P54538"/>
<dbReference type="OrthoDB" id="357521at2"/>
<dbReference type="PhylomeDB" id="P54538"/>
<dbReference type="BioCyc" id="BSUB:BSU23950-MONOMER"/>
<dbReference type="Proteomes" id="UP000001570">
    <property type="component" value="Chromosome"/>
</dbReference>
<dbReference type="GO" id="GO:0005886">
    <property type="term" value="C:plasma membrane"/>
    <property type="evidence" value="ECO:0007669"/>
    <property type="project" value="UniProtKB-SubCell"/>
</dbReference>
<dbReference type="Gene3D" id="1.20.120.940">
    <property type="entry name" value="Putative aromatic acid exporter, C-terminal domain"/>
    <property type="match status" value="1"/>
</dbReference>
<dbReference type="InterPro" id="IPR010343">
    <property type="entry name" value="ArAE_1"/>
</dbReference>
<dbReference type="InterPro" id="IPR021062">
    <property type="entry name" value="ArAE_1_C"/>
</dbReference>
<dbReference type="InterPro" id="IPR038323">
    <property type="entry name" value="ArAE_1_C_sf"/>
</dbReference>
<dbReference type="InterPro" id="IPR052984">
    <property type="entry name" value="UPF0421"/>
</dbReference>
<dbReference type="PANTHER" id="PTHR40064:SF1">
    <property type="entry name" value="MEMBRANE PROTEIN"/>
    <property type="match status" value="1"/>
</dbReference>
<dbReference type="PANTHER" id="PTHR40064">
    <property type="entry name" value="MEMBRANE PROTEIN-RELATED"/>
    <property type="match status" value="1"/>
</dbReference>
<dbReference type="Pfam" id="PF06081">
    <property type="entry name" value="ArAE_1"/>
    <property type="match status" value="1"/>
</dbReference>
<dbReference type="Pfam" id="PF11728">
    <property type="entry name" value="ArAE_1_C"/>
    <property type="match status" value="1"/>
</dbReference>
<organism>
    <name type="scientific">Bacillus subtilis (strain 168)</name>
    <dbReference type="NCBI Taxonomy" id="224308"/>
    <lineage>
        <taxon>Bacteria</taxon>
        <taxon>Bacillati</taxon>
        <taxon>Bacillota</taxon>
        <taxon>Bacilli</taxon>
        <taxon>Bacillales</taxon>
        <taxon>Bacillaceae</taxon>
        <taxon>Bacillus</taxon>
    </lineage>
</organism>
<sequence>MFKIGYRTIKTALGTALAIYISQLLHLQNFASAGIITILCIQITQKRSLQASWARFSACCLAIAFSYLFFELIGYHPFVIGALLLIFIPITVLLKINEGIVTSSVIILHLYMSGGITPTFIWNEVQLITVGIGVALLMNLYMPSLDRKLIAYRKKIEDNFAVIFAEIERYLLTGEQDWSGKEIPETHQLITEAKNLAYRDVQNHILRYENLHYHYFKMREKQFEIIERLLPKVTSISITVDQGKMIAEFIHDLREAIHPGNTAYKFLKRLADMRKEFEEMPLPATREEFEARAALFHLLGEMEQYLVIKSYFKGIKAQKSLG</sequence>
<gene>
    <name type="primary">yqjA</name>
    <name type="ordered locus">BSU23950</name>
</gene>
<feature type="chain" id="PRO_0000049828" description="Uncharacterized protein YqjA">
    <location>
        <begin position="1"/>
        <end position="322"/>
    </location>
</feature>
<feature type="transmembrane region" description="Helical" evidence="1">
    <location>
        <begin position="24"/>
        <end position="44"/>
    </location>
</feature>
<feature type="transmembrane region" description="Helical" evidence="1">
    <location>
        <begin position="68"/>
        <end position="88"/>
    </location>
</feature>
<feature type="transmembrane region" description="Helical" evidence="1">
    <location>
        <begin position="100"/>
        <end position="120"/>
    </location>
</feature>
<feature type="transmembrane region" description="Helical" evidence="1">
    <location>
        <begin position="125"/>
        <end position="145"/>
    </location>
</feature>
<feature type="sequence conflict" description="In Ref. 1; BAA12607." evidence="2" ref="1">
    <original>S</original>
    <variation>W</variation>
    <location>
        <position position="57"/>
    </location>
</feature>
<reference key="1">
    <citation type="journal article" date="1996" name="Microbiology">
        <title>Systematic sequencing of the 283 kb 210 degrees-232 degrees region of the Bacillus subtilis genome containing the skin element and many sporulation genes.</title>
        <authorList>
            <person name="Mizuno M."/>
            <person name="Masuda S."/>
            <person name="Takemaru K."/>
            <person name="Hosono S."/>
            <person name="Sato T."/>
            <person name="Takeuchi M."/>
            <person name="Kobayashi Y."/>
        </authorList>
    </citation>
    <scope>NUCLEOTIDE SEQUENCE [GENOMIC DNA]</scope>
    <source>
        <strain>168 / JH642</strain>
    </source>
</reference>
<reference key="2">
    <citation type="journal article" date="1997" name="Nature">
        <title>The complete genome sequence of the Gram-positive bacterium Bacillus subtilis.</title>
        <authorList>
            <person name="Kunst F."/>
            <person name="Ogasawara N."/>
            <person name="Moszer I."/>
            <person name="Albertini A.M."/>
            <person name="Alloni G."/>
            <person name="Azevedo V."/>
            <person name="Bertero M.G."/>
            <person name="Bessieres P."/>
            <person name="Bolotin A."/>
            <person name="Borchert S."/>
            <person name="Borriss R."/>
            <person name="Boursier L."/>
            <person name="Brans A."/>
            <person name="Braun M."/>
            <person name="Brignell S.C."/>
            <person name="Bron S."/>
            <person name="Brouillet S."/>
            <person name="Bruschi C.V."/>
            <person name="Caldwell B."/>
            <person name="Capuano V."/>
            <person name="Carter N.M."/>
            <person name="Choi S.-K."/>
            <person name="Codani J.-J."/>
            <person name="Connerton I.F."/>
            <person name="Cummings N.J."/>
            <person name="Daniel R.A."/>
            <person name="Denizot F."/>
            <person name="Devine K.M."/>
            <person name="Duesterhoeft A."/>
            <person name="Ehrlich S.D."/>
            <person name="Emmerson P.T."/>
            <person name="Entian K.-D."/>
            <person name="Errington J."/>
            <person name="Fabret C."/>
            <person name="Ferrari E."/>
            <person name="Foulger D."/>
            <person name="Fritz C."/>
            <person name="Fujita M."/>
            <person name="Fujita Y."/>
            <person name="Fuma S."/>
            <person name="Galizzi A."/>
            <person name="Galleron N."/>
            <person name="Ghim S.-Y."/>
            <person name="Glaser P."/>
            <person name="Goffeau A."/>
            <person name="Golightly E.J."/>
            <person name="Grandi G."/>
            <person name="Guiseppi G."/>
            <person name="Guy B.J."/>
            <person name="Haga K."/>
            <person name="Haiech J."/>
            <person name="Harwood C.R."/>
            <person name="Henaut A."/>
            <person name="Hilbert H."/>
            <person name="Holsappel S."/>
            <person name="Hosono S."/>
            <person name="Hullo M.-F."/>
            <person name="Itaya M."/>
            <person name="Jones L.-M."/>
            <person name="Joris B."/>
            <person name="Karamata D."/>
            <person name="Kasahara Y."/>
            <person name="Klaerr-Blanchard M."/>
            <person name="Klein C."/>
            <person name="Kobayashi Y."/>
            <person name="Koetter P."/>
            <person name="Koningstein G."/>
            <person name="Krogh S."/>
            <person name="Kumano M."/>
            <person name="Kurita K."/>
            <person name="Lapidus A."/>
            <person name="Lardinois S."/>
            <person name="Lauber J."/>
            <person name="Lazarevic V."/>
            <person name="Lee S.-M."/>
            <person name="Levine A."/>
            <person name="Liu H."/>
            <person name="Masuda S."/>
            <person name="Mauel C."/>
            <person name="Medigue C."/>
            <person name="Medina N."/>
            <person name="Mellado R.P."/>
            <person name="Mizuno M."/>
            <person name="Moestl D."/>
            <person name="Nakai S."/>
            <person name="Noback M."/>
            <person name="Noone D."/>
            <person name="O'Reilly M."/>
            <person name="Ogawa K."/>
            <person name="Ogiwara A."/>
            <person name="Oudega B."/>
            <person name="Park S.-H."/>
            <person name="Parro V."/>
            <person name="Pohl T.M."/>
            <person name="Portetelle D."/>
            <person name="Porwollik S."/>
            <person name="Prescott A.M."/>
            <person name="Presecan E."/>
            <person name="Pujic P."/>
            <person name="Purnelle B."/>
            <person name="Rapoport G."/>
            <person name="Rey M."/>
            <person name="Reynolds S."/>
            <person name="Rieger M."/>
            <person name="Rivolta C."/>
            <person name="Rocha E."/>
            <person name="Roche B."/>
            <person name="Rose M."/>
            <person name="Sadaie Y."/>
            <person name="Sato T."/>
            <person name="Scanlan E."/>
            <person name="Schleich S."/>
            <person name="Schroeter R."/>
            <person name="Scoffone F."/>
            <person name="Sekiguchi J."/>
            <person name="Sekowska A."/>
            <person name="Seror S.J."/>
            <person name="Serror P."/>
            <person name="Shin B.-S."/>
            <person name="Soldo B."/>
            <person name="Sorokin A."/>
            <person name="Tacconi E."/>
            <person name="Takagi T."/>
            <person name="Takahashi H."/>
            <person name="Takemaru K."/>
            <person name="Takeuchi M."/>
            <person name="Tamakoshi A."/>
            <person name="Tanaka T."/>
            <person name="Terpstra P."/>
            <person name="Tognoni A."/>
            <person name="Tosato V."/>
            <person name="Uchiyama S."/>
            <person name="Vandenbol M."/>
            <person name="Vannier F."/>
            <person name="Vassarotti A."/>
            <person name="Viari A."/>
            <person name="Wambutt R."/>
            <person name="Wedler E."/>
            <person name="Wedler H."/>
            <person name="Weitzenegger T."/>
            <person name="Winters P."/>
            <person name="Wipat A."/>
            <person name="Yamamoto H."/>
            <person name="Yamane K."/>
            <person name="Yasumoto K."/>
            <person name="Yata K."/>
            <person name="Yoshida K."/>
            <person name="Yoshikawa H.-F."/>
            <person name="Zumstein E."/>
            <person name="Yoshikawa H."/>
            <person name="Danchin A."/>
        </authorList>
    </citation>
    <scope>NUCLEOTIDE SEQUENCE [LARGE SCALE GENOMIC DNA]</scope>
    <source>
        <strain>168</strain>
    </source>
</reference>
<reference key="3">
    <citation type="journal article" date="2009" name="Microbiology">
        <title>From a consortium sequence to a unified sequence: the Bacillus subtilis 168 reference genome a decade later.</title>
        <authorList>
            <person name="Barbe V."/>
            <person name="Cruveiller S."/>
            <person name="Kunst F."/>
            <person name="Lenoble P."/>
            <person name="Meurice G."/>
            <person name="Sekowska A."/>
            <person name="Vallenet D."/>
            <person name="Wang T."/>
            <person name="Moszer I."/>
            <person name="Medigue C."/>
            <person name="Danchin A."/>
        </authorList>
    </citation>
    <scope>SEQUENCE REVISION TO 57</scope>
</reference>
<accession>P54538</accession>
<proteinExistence type="predicted"/>
<evidence type="ECO:0000255" key="1"/>
<evidence type="ECO:0000305" key="2"/>